<comment type="function">
    <text evidence="1">Single strand-specific metallo-endoribonuclease involved in late-stage 70S ribosome quality control and in maturation of the 3' terminus of the 16S rRNA.</text>
</comment>
<comment type="cofactor">
    <cofactor evidence="1">
        <name>Zn(2+)</name>
        <dbReference type="ChEBI" id="CHEBI:29105"/>
    </cofactor>
    <text evidence="1">Binds 1 zinc ion.</text>
</comment>
<comment type="subcellular location">
    <subcellularLocation>
        <location evidence="1">Cytoplasm</location>
    </subcellularLocation>
</comment>
<comment type="similarity">
    <text evidence="1">Belongs to the endoribonuclease YbeY family.</text>
</comment>
<dbReference type="EC" id="3.1.-.-" evidence="1"/>
<dbReference type="EMBL" id="CP000020">
    <property type="protein sequence ID" value="AAW85252.1"/>
    <property type="molecule type" value="Genomic_DNA"/>
</dbReference>
<dbReference type="RefSeq" id="WP_005418185.1">
    <property type="nucleotide sequence ID" value="NC_006840.2"/>
</dbReference>
<dbReference type="RefSeq" id="YP_204140.1">
    <property type="nucleotide sequence ID" value="NC_006840.2"/>
</dbReference>
<dbReference type="SMR" id="Q5E6U4"/>
<dbReference type="STRING" id="312309.VF_0757"/>
<dbReference type="EnsemblBacteria" id="AAW85252">
    <property type="protein sequence ID" value="AAW85252"/>
    <property type="gene ID" value="VF_0757"/>
</dbReference>
<dbReference type="GeneID" id="54163411"/>
<dbReference type="KEGG" id="vfi:VF_0757"/>
<dbReference type="PATRIC" id="fig|312309.11.peg.750"/>
<dbReference type="eggNOG" id="COG0319">
    <property type="taxonomic scope" value="Bacteria"/>
</dbReference>
<dbReference type="HOGENOM" id="CLU_106710_0_1_6"/>
<dbReference type="OrthoDB" id="9807740at2"/>
<dbReference type="Proteomes" id="UP000000537">
    <property type="component" value="Chromosome I"/>
</dbReference>
<dbReference type="GO" id="GO:0005737">
    <property type="term" value="C:cytoplasm"/>
    <property type="evidence" value="ECO:0007669"/>
    <property type="project" value="UniProtKB-SubCell"/>
</dbReference>
<dbReference type="GO" id="GO:0004222">
    <property type="term" value="F:metalloendopeptidase activity"/>
    <property type="evidence" value="ECO:0007669"/>
    <property type="project" value="InterPro"/>
</dbReference>
<dbReference type="GO" id="GO:0004521">
    <property type="term" value="F:RNA endonuclease activity"/>
    <property type="evidence" value="ECO:0007669"/>
    <property type="project" value="UniProtKB-UniRule"/>
</dbReference>
<dbReference type="GO" id="GO:0008270">
    <property type="term" value="F:zinc ion binding"/>
    <property type="evidence" value="ECO:0007669"/>
    <property type="project" value="UniProtKB-UniRule"/>
</dbReference>
<dbReference type="GO" id="GO:0006364">
    <property type="term" value="P:rRNA processing"/>
    <property type="evidence" value="ECO:0007669"/>
    <property type="project" value="UniProtKB-UniRule"/>
</dbReference>
<dbReference type="Gene3D" id="3.40.390.30">
    <property type="entry name" value="Metalloproteases ('zincins'), catalytic domain"/>
    <property type="match status" value="1"/>
</dbReference>
<dbReference type="HAMAP" id="MF_00009">
    <property type="entry name" value="Endoribonucl_YbeY"/>
    <property type="match status" value="1"/>
</dbReference>
<dbReference type="InterPro" id="IPR023091">
    <property type="entry name" value="MetalPrtase_cat_dom_sf_prd"/>
</dbReference>
<dbReference type="InterPro" id="IPR002036">
    <property type="entry name" value="YbeY"/>
</dbReference>
<dbReference type="InterPro" id="IPR020549">
    <property type="entry name" value="YbeY_CS"/>
</dbReference>
<dbReference type="NCBIfam" id="TIGR00043">
    <property type="entry name" value="rRNA maturation RNase YbeY"/>
    <property type="match status" value="1"/>
</dbReference>
<dbReference type="PANTHER" id="PTHR46986">
    <property type="entry name" value="ENDORIBONUCLEASE YBEY, CHLOROPLASTIC"/>
    <property type="match status" value="1"/>
</dbReference>
<dbReference type="PANTHER" id="PTHR46986:SF1">
    <property type="entry name" value="ENDORIBONUCLEASE YBEY, CHLOROPLASTIC"/>
    <property type="match status" value="1"/>
</dbReference>
<dbReference type="Pfam" id="PF02130">
    <property type="entry name" value="YbeY"/>
    <property type="match status" value="1"/>
</dbReference>
<dbReference type="SUPFAM" id="SSF55486">
    <property type="entry name" value="Metalloproteases ('zincins'), catalytic domain"/>
    <property type="match status" value="1"/>
</dbReference>
<dbReference type="PROSITE" id="PS01306">
    <property type="entry name" value="UPF0054"/>
    <property type="match status" value="1"/>
</dbReference>
<proteinExistence type="inferred from homology"/>
<gene>
    <name evidence="1" type="primary">ybeY</name>
    <name type="ordered locus">VF_0757</name>
</gene>
<name>YBEY_ALIF1</name>
<protein>
    <recommendedName>
        <fullName evidence="1">Endoribonuclease YbeY</fullName>
        <ecNumber evidence="1">3.1.-.-</ecNumber>
    </recommendedName>
</protein>
<accession>Q5E6U4</accession>
<keyword id="KW-0963">Cytoplasm</keyword>
<keyword id="KW-0255">Endonuclease</keyword>
<keyword id="KW-0378">Hydrolase</keyword>
<keyword id="KW-0479">Metal-binding</keyword>
<keyword id="KW-0540">Nuclease</keyword>
<keyword id="KW-1185">Reference proteome</keyword>
<keyword id="KW-0690">Ribosome biogenesis</keyword>
<keyword id="KW-0698">rRNA processing</keyword>
<keyword id="KW-0862">Zinc</keyword>
<sequence length="153" mass="17490">MSIELDLQIACENENGLPSEKELMTWLNAVIPQFQPQAELTIRIVDEKESHELNHEYRGKDKPTNVLSFPFEAPPGLELNLLGDLIICRQVVEEEAIEQNKPLLAHWAHMVVHGSLHLLGYDHIEDDEAEEMESLETELMQGMGFEDPYIAEK</sequence>
<organism>
    <name type="scientific">Aliivibrio fischeri (strain ATCC 700601 / ES114)</name>
    <name type="common">Vibrio fischeri</name>
    <dbReference type="NCBI Taxonomy" id="312309"/>
    <lineage>
        <taxon>Bacteria</taxon>
        <taxon>Pseudomonadati</taxon>
        <taxon>Pseudomonadota</taxon>
        <taxon>Gammaproteobacteria</taxon>
        <taxon>Vibrionales</taxon>
        <taxon>Vibrionaceae</taxon>
        <taxon>Aliivibrio</taxon>
    </lineage>
</organism>
<evidence type="ECO:0000255" key="1">
    <source>
        <dbReference type="HAMAP-Rule" id="MF_00009"/>
    </source>
</evidence>
<feature type="chain" id="PRO_0000102563" description="Endoribonuclease YbeY">
    <location>
        <begin position="1"/>
        <end position="153"/>
    </location>
</feature>
<feature type="binding site" evidence="1">
    <location>
        <position position="113"/>
    </location>
    <ligand>
        <name>Zn(2+)</name>
        <dbReference type="ChEBI" id="CHEBI:29105"/>
        <note>catalytic</note>
    </ligand>
</feature>
<feature type="binding site" evidence="1">
    <location>
        <position position="117"/>
    </location>
    <ligand>
        <name>Zn(2+)</name>
        <dbReference type="ChEBI" id="CHEBI:29105"/>
        <note>catalytic</note>
    </ligand>
</feature>
<feature type="binding site" evidence="1">
    <location>
        <position position="123"/>
    </location>
    <ligand>
        <name>Zn(2+)</name>
        <dbReference type="ChEBI" id="CHEBI:29105"/>
        <note>catalytic</note>
    </ligand>
</feature>
<reference key="1">
    <citation type="journal article" date="2005" name="Proc. Natl. Acad. Sci. U.S.A.">
        <title>Complete genome sequence of Vibrio fischeri: a symbiotic bacterium with pathogenic congeners.</title>
        <authorList>
            <person name="Ruby E.G."/>
            <person name="Urbanowski M."/>
            <person name="Campbell J."/>
            <person name="Dunn A."/>
            <person name="Faini M."/>
            <person name="Gunsalus R."/>
            <person name="Lostroh P."/>
            <person name="Lupp C."/>
            <person name="McCann J."/>
            <person name="Millikan D."/>
            <person name="Schaefer A."/>
            <person name="Stabb E."/>
            <person name="Stevens A."/>
            <person name="Visick K."/>
            <person name="Whistler C."/>
            <person name="Greenberg E.P."/>
        </authorList>
    </citation>
    <scope>NUCLEOTIDE SEQUENCE [LARGE SCALE GENOMIC DNA]</scope>
    <source>
        <strain>ATCC 700601 / ES114</strain>
    </source>
</reference>